<dbReference type="EMBL" id="AE007870">
    <property type="protein sequence ID" value="AAK89678.1"/>
    <property type="molecule type" value="Genomic_DNA"/>
</dbReference>
<dbReference type="PIR" id="AC3015">
    <property type="entry name" value="AC3015"/>
</dbReference>
<dbReference type="PIR" id="D98269">
    <property type="entry name" value="D98269"/>
</dbReference>
<dbReference type="RefSeq" id="NP_356893.1">
    <property type="nucleotide sequence ID" value="NC_003063.2"/>
</dbReference>
<dbReference type="RefSeq" id="WP_010973281.1">
    <property type="nucleotide sequence ID" value="NC_003063.2"/>
</dbReference>
<dbReference type="SMR" id="Q8U9K1"/>
<dbReference type="STRING" id="176299.Atu3727"/>
<dbReference type="EnsemblBacteria" id="AAK89678">
    <property type="protein sequence ID" value="AAK89678"/>
    <property type="gene ID" value="Atu3727"/>
</dbReference>
<dbReference type="GeneID" id="1135601"/>
<dbReference type="KEGG" id="atu:Atu3727"/>
<dbReference type="PATRIC" id="fig|176299.10.peg.3560"/>
<dbReference type="eggNOG" id="COG0217">
    <property type="taxonomic scope" value="Bacteria"/>
</dbReference>
<dbReference type="HOGENOM" id="CLU_062974_2_2_5"/>
<dbReference type="OrthoDB" id="9781053at2"/>
<dbReference type="PhylomeDB" id="Q8U9K1"/>
<dbReference type="BioCyc" id="AGRO:ATU3727-MONOMER"/>
<dbReference type="Proteomes" id="UP000000813">
    <property type="component" value="Chromosome linear"/>
</dbReference>
<dbReference type="GO" id="GO:0005829">
    <property type="term" value="C:cytosol"/>
    <property type="evidence" value="ECO:0007669"/>
    <property type="project" value="TreeGrafter"/>
</dbReference>
<dbReference type="GO" id="GO:0003677">
    <property type="term" value="F:DNA binding"/>
    <property type="evidence" value="ECO:0007669"/>
    <property type="project" value="UniProtKB-UniRule"/>
</dbReference>
<dbReference type="GO" id="GO:0006355">
    <property type="term" value="P:regulation of DNA-templated transcription"/>
    <property type="evidence" value="ECO:0007669"/>
    <property type="project" value="UniProtKB-UniRule"/>
</dbReference>
<dbReference type="FunFam" id="1.10.10.200:FF:000002">
    <property type="entry name" value="Probable transcriptional regulatory protein CLM62_37755"/>
    <property type="match status" value="1"/>
</dbReference>
<dbReference type="Gene3D" id="1.10.10.200">
    <property type="match status" value="1"/>
</dbReference>
<dbReference type="Gene3D" id="3.30.70.980">
    <property type="match status" value="2"/>
</dbReference>
<dbReference type="HAMAP" id="MF_00693">
    <property type="entry name" value="Transcrip_reg_TACO1"/>
    <property type="match status" value="1"/>
</dbReference>
<dbReference type="InterPro" id="IPR017856">
    <property type="entry name" value="Integrase-like_N"/>
</dbReference>
<dbReference type="InterPro" id="IPR048300">
    <property type="entry name" value="TACO1_YebC-like_2nd/3rd_dom"/>
</dbReference>
<dbReference type="InterPro" id="IPR049083">
    <property type="entry name" value="TACO1_YebC_N"/>
</dbReference>
<dbReference type="InterPro" id="IPR002876">
    <property type="entry name" value="Transcrip_reg_TACO1-like"/>
</dbReference>
<dbReference type="InterPro" id="IPR026564">
    <property type="entry name" value="Transcrip_reg_TACO1-like_dom3"/>
</dbReference>
<dbReference type="InterPro" id="IPR029072">
    <property type="entry name" value="YebC-like"/>
</dbReference>
<dbReference type="NCBIfam" id="NF001030">
    <property type="entry name" value="PRK00110.1"/>
    <property type="match status" value="1"/>
</dbReference>
<dbReference type="NCBIfam" id="NF009044">
    <property type="entry name" value="PRK12378.1"/>
    <property type="match status" value="1"/>
</dbReference>
<dbReference type="NCBIfam" id="TIGR01033">
    <property type="entry name" value="YebC/PmpR family DNA-binding transcriptional regulator"/>
    <property type="match status" value="1"/>
</dbReference>
<dbReference type="PANTHER" id="PTHR12532:SF6">
    <property type="entry name" value="TRANSCRIPTIONAL REGULATORY PROTEIN YEBC-RELATED"/>
    <property type="match status" value="1"/>
</dbReference>
<dbReference type="PANTHER" id="PTHR12532">
    <property type="entry name" value="TRANSLATIONAL ACTIVATOR OF CYTOCHROME C OXIDASE 1"/>
    <property type="match status" value="1"/>
</dbReference>
<dbReference type="Pfam" id="PF20772">
    <property type="entry name" value="TACO1_YebC_N"/>
    <property type="match status" value="1"/>
</dbReference>
<dbReference type="Pfam" id="PF01709">
    <property type="entry name" value="Transcrip_reg"/>
    <property type="match status" value="1"/>
</dbReference>
<dbReference type="SUPFAM" id="SSF75625">
    <property type="entry name" value="YebC-like"/>
    <property type="match status" value="1"/>
</dbReference>
<protein>
    <recommendedName>
        <fullName evidence="1">Probable transcriptional regulatory protein Atu3727</fullName>
    </recommendedName>
</protein>
<evidence type="ECO:0000255" key="1">
    <source>
        <dbReference type="HAMAP-Rule" id="MF_00693"/>
    </source>
</evidence>
<evidence type="ECO:0000256" key="2">
    <source>
        <dbReference type="SAM" id="MobiDB-lite"/>
    </source>
</evidence>
<gene>
    <name type="ordered locus">Atu3727</name>
    <name type="ORF">AGR_L_2215</name>
</gene>
<reference key="1">
    <citation type="journal article" date="2001" name="Science">
        <title>The genome of the natural genetic engineer Agrobacterium tumefaciens C58.</title>
        <authorList>
            <person name="Wood D.W."/>
            <person name="Setubal J.C."/>
            <person name="Kaul R."/>
            <person name="Monks D.E."/>
            <person name="Kitajima J.P."/>
            <person name="Okura V.K."/>
            <person name="Zhou Y."/>
            <person name="Chen L."/>
            <person name="Wood G.E."/>
            <person name="Almeida N.F. Jr."/>
            <person name="Woo L."/>
            <person name="Chen Y."/>
            <person name="Paulsen I.T."/>
            <person name="Eisen J.A."/>
            <person name="Karp P.D."/>
            <person name="Bovee D. Sr."/>
            <person name="Chapman P."/>
            <person name="Clendenning J."/>
            <person name="Deatherage G."/>
            <person name="Gillet W."/>
            <person name="Grant C."/>
            <person name="Kutyavin T."/>
            <person name="Levy R."/>
            <person name="Li M.-J."/>
            <person name="McClelland E."/>
            <person name="Palmieri A."/>
            <person name="Raymond C."/>
            <person name="Rouse G."/>
            <person name="Saenphimmachak C."/>
            <person name="Wu Z."/>
            <person name="Romero P."/>
            <person name="Gordon D."/>
            <person name="Zhang S."/>
            <person name="Yoo H."/>
            <person name="Tao Y."/>
            <person name="Biddle P."/>
            <person name="Jung M."/>
            <person name="Krespan W."/>
            <person name="Perry M."/>
            <person name="Gordon-Kamm B."/>
            <person name="Liao L."/>
            <person name="Kim S."/>
            <person name="Hendrick C."/>
            <person name="Zhao Z.-Y."/>
            <person name="Dolan M."/>
            <person name="Chumley F."/>
            <person name="Tingey S.V."/>
            <person name="Tomb J.-F."/>
            <person name="Gordon M.P."/>
            <person name="Olson M.V."/>
            <person name="Nester E.W."/>
        </authorList>
    </citation>
    <scope>NUCLEOTIDE SEQUENCE [LARGE SCALE GENOMIC DNA]</scope>
    <source>
        <strain>C58 / ATCC 33970</strain>
    </source>
</reference>
<reference key="2">
    <citation type="journal article" date="2001" name="Science">
        <title>Genome sequence of the plant pathogen and biotechnology agent Agrobacterium tumefaciens C58.</title>
        <authorList>
            <person name="Goodner B."/>
            <person name="Hinkle G."/>
            <person name="Gattung S."/>
            <person name="Miller N."/>
            <person name="Blanchard M."/>
            <person name="Qurollo B."/>
            <person name="Goldman B.S."/>
            <person name="Cao Y."/>
            <person name="Askenazi M."/>
            <person name="Halling C."/>
            <person name="Mullin L."/>
            <person name="Houmiel K."/>
            <person name="Gordon J."/>
            <person name="Vaudin M."/>
            <person name="Iartchouk O."/>
            <person name="Epp A."/>
            <person name="Liu F."/>
            <person name="Wollam C."/>
            <person name="Allinger M."/>
            <person name="Doughty D."/>
            <person name="Scott C."/>
            <person name="Lappas C."/>
            <person name="Markelz B."/>
            <person name="Flanagan C."/>
            <person name="Crowell C."/>
            <person name="Gurson J."/>
            <person name="Lomo C."/>
            <person name="Sear C."/>
            <person name="Strub G."/>
            <person name="Cielo C."/>
            <person name="Slater S."/>
        </authorList>
    </citation>
    <scope>NUCLEOTIDE SEQUENCE [LARGE SCALE GENOMIC DNA]</scope>
    <source>
        <strain>C58 / ATCC 33970</strain>
    </source>
</reference>
<organism>
    <name type="scientific">Agrobacterium fabrum (strain C58 / ATCC 33970)</name>
    <name type="common">Agrobacterium tumefaciens (strain C58)</name>
    <dbReference type="NCBI Taxonomy" id="176299"/>
    <lineage>
        <taxon>Bacteria</taxon>
        <taxon>Pseudomonadati</taxon>
        <taxon>Pseudomonadota</taxon>
        <taxon>Alphaproteobacteria</taxon>
        <taxon>Hyphomicrobiales</taxon>
        <taxon>Rhizobiaceae</taxon>
        <taxon>Rhizobium/Agrobacterium group</taxon>
        <taxon>Agrobacterium</taxon>
        <taxon>Agrobacterium tumefaciens complex</taxon>
    </lineage>
</organism>
<name>Y3727_AGRFC</name>
<sequence>MAGHSQFKNIMHRKGKQDSVRSKMFSKLAREITVAAKTGMPDPNMNARLRLAIQNAKAQSMPKDNIERAIKKASGADSENYDEVRYEGYGPGGVAVVVEALTDNRNRTASNVRSIFTKAGGALGETGSVSFSFDRVGEITYKAEVGDADKVMEAAIEAGADDVESSEDGHTIICGFEAMNEVSKALEGVLGEAESVKAIWKPQNTVPVDEEKAQSLMKLIDNLEDDDDVQNVYSNFEVSEEILAKLSA</sequence>
<comment type="subcellular location">
    <subcellularLocation>
        <location evidence="1">Cytoplasm</location>
    </subcellularLocation>
</comment>
<comment type="similarity">
    <text evidence="1">Belongs to the TACO1 family.</text>
</comment>
<proteinExistence type="inferred from homology"/>
<keyword id="KW-0963">Cytoplasm</keyword>
<keyword id="KW-0238">DNA-binding</keyword>
<keyword id="KW-1185">Reference proteome</keyword>
<keyword id="KW-0804">Transcription</keyword>
<keyword id="KW-0805">Transcription regulation</keyword>
<feature type="chain" id="PRO_0000175747" description="Probable transcriptional regulatory protein Atu3727">
    <location>
        <begin position="1"/>
        <end position="248"/>
    </location>
</feature>
<feature type="region of interest" description="Disordered" evidence="2">
    <location>
        <begin position="1"/>
        <end position="21"/>
    </location>
</feature>
<accession>Q8U9K1</accession>